<sequence>MPTLTQQKIRIRLKAYDHRLLDTSCDKIVDTARRTDAVPVGPIPLPTRRRIYCVLRSPHIDKDSREHFETRTHRRIIDIYSPSSKTIDALMKLDLPAGVDIEVKL</sequence>
<feature type="chain" id="PRO_0000237107" description="Small ribosomal subunit protein uS10">
    <location>
        <begin position="1"/>
        <end position="105"/>
    </location>
</feature>
<accession>Q2JMX6</accession>
<gene>
    <name evidence="1" type="primary">rpsJ</name>
    <name evidence="1" type="synonym">rps10</name>
    <name type="ordered locus">CYB_0922</name>
</gene>
<dbReference type="EMBL" id="CP000240">
    <property type="protein sequence ID" value="ABD01901.1"/>
    <property type="molecule type" value="Genomic_DNA"/>
</dbReference>
<dbReference type="RefSeq" id="WP_011432557.1">
    <property type="nucleotide sequence ID" value="NC_007776.1"/>
</dbReference>
<dbReference type="SMR" id="Q2JMX6"/>
<dbReference type="STRING" id="321332.CYB_0922"/>
<dbReference type="KEGG" id="cyb:CYB_0922"/>
<dbReference type="eggNOG" id="COG0051">
    <property type="taxonomic scope" value="Bacteria"/>
</dbReference>
<dbReference type="HOGENOM" id="CLU_122625_1_3_3"/>
<dbReference type="OrthoDB" id="9804464at2"/>
<dbReference type="Proteomes" id="UP000001938">
    <property type="component" value="Chromosome"/>
</dbReference>
<dbReference type="GO" id="GO:1990904">
    <property type="term" value="C:ribonucleoprotein complex"/>
    <property type="evidence" value="ECO:0007669"/>
    <property type="project" value="UniProtKB-KW"/>
</dbReference>
<dbReference type="GO" id="GO:0005840">
    <property type="term" value="C:ribosome"/>
    <property type="evidence" value="ECO:0007669"/>
    <property type="project" value="UniProtKB-KW"/>
</dbReference>
<dbReference type="GO" id="GO:0003735">
    <property type="term" value="F:structural constituent of ribosome"/>
    <property type="evidence" value="ECO:0007669"/>
    <property type="project" value="InterPro"/>
</dbReference>
<dbReference type="GO" id="GO:0000049">
    <property type="term" value="F:tRNA binding"/>
    <property type="evidence" value="ECO:0007669"/>
    <property type="project" value="UniProtKB-UniRule"/>
</dbReference>
<dbReference type="GO" id="GO:0006412">
    <property type="term" value="P:translation"/>
    <property type="evidence" value="ECO:0007669"/>
    <property type="project" value="UniProtKB-UniRule"/>
</dbReference>
<dbReference type="FunFam" id="3.30.70.600:FF:000001">
    <property type="entry name" value="30S ribosomal protein S10"/>
    <property type="match status" value="1"/>
</dbReference>
<dbReference type="Gene3D" id="3.30.70.600">
    <property type="entry name" value="Ribosomal protein S10 domain"/>
    <property type="match status" value="1"/>
</dbReference>
<dbReference type="HAMAP" id="MF_00508">
    <property type="entry name" value="Ribosomal_uS10"/>
    <property type="match status" value="1"/>
</dbReference>
<dbReference type="InterPro" id="IPR001848">
    <property type="entry name" value="Ribosomal_uS10"/>
</dbReference>
<dbReference type="InterPro" id="IPR018268">
    <property type="entry name" value="Ribosomal_uS10_CS"/>
</dbReference>
<dbReference type="InterPro" id="IPR027486">
    <property type="entry name" value="Ribosomal_uS10_dom"/>
</dbReference>
<dbReference type="InterPro" id="IPR036838">
    <property type="entry name" value="Ribosomal_uS10_dom_sf"/>
</dbReference>
<dbReference type="NCBIfam" id="NF001861">
    <property type="entry name" value="PRK00596.1"/>
    <property type="match status" value="1"/>
</dbReference>
<dbReference type="NCBIfam" id="TIGR01049">
    <property type="entry name" value="rpsJ_bact"/>
    <property type="match status" value="1"/>
</dbReference>
<dbReference type="PANTHER" id="PTHR11700">
    <property type="entry name" value="30S RIBOSOMAL PROTEIN S10 FAMILY MEMBER"/>
    <property type="match status" value="1"/>
</dbReference>
<dbReference type="Pfam" id="PF00338">
    <property type="entry name" value="Ribosomal_S10"/>
    <property type="match status" value="1"/>
</dbReference>
<dbReference type="PRINTS" id="PR00971">
    <property type="entry name" value="RIBOSOMALS10"/>
</dbReference>
<dbReference type="SMART" id="SM01403">
    <property type="entry name" value="Ribosomal_S10"/>
    <property type="match status" value="1"/>
</dbReference>
<dbReference type="SUPFAM" id="SSF54999">
    <property type="entry name" value="Ribosomal protein S10"/>
    <property type="match status" value="1"/>
</dbReference>
<dbReference type="PROSITE" id="PS00361">
    <property type="entry name" value="RIBOSOMAL_S10"/>
    <property type="match status" value="1"/>
</dbReference>
<keyword id="KW-1185">Reference proteome</keyword>
<keyword id="KW-0687">Ribonucleoprotein</keyword>
<keyword id="KW-0689">Ribosomal protein</keyword>
<comment type="function">
    <text evidence="1">Involved in the binding of tRNA to the ribosomes.</text>
</comment>
<comment type="subunit">
    <text evidence="1">Part of the 30S ribosomal subunit.</text>
</comment>
<comment type="similarity">
    <text evidence="1">Belongs to the universal ribosomal protein uS10 family.</text>
</comment>
<protein>
    <recommendedName>
        <fullName evidence="1">Small ribosomal subunit protein uS10</fullName>
    </recommendedName>
    <alternativeName>
        <fullName evidence="2">30S ribosomal protein S10</fullName>
    </alternativeName>
</protein>
<name>RS10_SYNJB</name>
<proteinExistence type="inferred from homology"/>
<evidence type="ECO:0000255" key="1">
    <source>
        <dbReference type="HAMAP-Rule" id="MF_00508"/>
    </source>
</evidence>
<evidence type="ECO:0000305" key="2"/>
<reference key="1">
    <citation type="journal article" date="2007" name="ISME J.">
        <title>Population level functional diversity in a microbial community revealed by comparative genomic and metagenomic analyses.</title>
        <authorList>
            <person name="Bhaya D."/>
            <person name="Grossman A.R."/>
            <person name="Steunou A.-S."/>
            <person name="Khuri N."/>
            <person name="Cohan F.M."/>
            <person name="Hamamura N."/>
            <person name="Melendrez M.C."/>
            <person name="Bateson M.M."/>
            <person name="Ward D.M."/>
            <person name="Heidelberg J.F."/>
        </authorList>
    </citation>
    <scope>NUCLEOTIDE SEQUENCE [LARGE SCALE GENOMIC DNA]</scope>
    <source>
        <strain>JA-2-3B'a(2-13)</strain>
    </source>
</reference>
<organism>
    <name type="scientific">Synechococcus sp. (strain JA-2-3B'a(2-13))</name>
    <name type="common">Cyanobacteria bacterium Yellowstone B-Prime</name>
    <dbReference type="NCBI Taxonomy" id="321332"/>
    <lineage>
        <taxon>Bacteria</taxon>
        <taxon>Bacillati</taxon>
        <taxon>Cyanobacteriota</taxon>
        <taxon>Cyanophyceae</taxon>
        <taxon>Synechococcales</taxon>
        <taxon>Synechococcaceae</taxon>
        <taxon>Synechococcus</taxon>
    </lineage>
</organism>